<dbReference type="EMBL" id="CP000034">
    <property type="protein sequence ID" value="ABB61104.1"/>
    <property type="molecule type" value="Genomic_DNA"/>
</dbReference>
<dbReference type="RefSeq" id="WP_000877161.1">
    <property type="nucleotide sequence ID" value="NC_007606.1"/>
</dbReference>
<dbReference type="RefSeq" id="YP_402595.1">
    <property type="nucleotide sequence ID" value="NC_007606.1"/>
</dbReference>
<dbReference type="SMR" id="Q32HV1"/>
<dbReference type="STRING" id="300267.SDY_0929"/>
<dbReference type="EnsemblBacteria" id="ABB61104">
    <property type="protein sequence ID" value="ABB61104"/>
    <property type="gene ID" value="SDY_0929"/>
</dbReference>
<dbReference type="GeneID" id="93776458"/>
<dbReference type="KEGG" id="sdy:SDY_0929"/>
<dbReference type="PATRIC" id="fig|300267.13.peg.1076"/>
<dbReference type="HOGENOM" id="CLU_142157_0_0_6"/>
<dbReference type="Proteomes" id="UP000002716">
    <property type="component" value="Chromosome"/>
</dbReference>
<dbReference type="GO" id="GO:0005737">
    <property type="term" value="C:cytoplasm"/>
    <property type="evidence" value="ECO:0007669"/>
    <property type="project" value="UniProtKB-SubCell"/>
</dbReference>
<dbReference type="GO" id="GO:0043565">
    <property type="term" value="F:sequence-specific DNA binding"/>
    <property type="evidence" value="ECO:0007669"/>
    <property type="project" value="UniProtKB-UniRule"/>
</dbReference>
<dbReference type="GO" id="GO:0051301">
    <property type="term" value="P:cell division"/>
    <property type="evidence" value="ECO:0007669"/>
    <property type="project" value="UniProtKB-UniRule"/>
</dbReference>
<dbReference type="GO" id="GO:0006355">
    <property type="term" value="P:regulation of DNA-templated transcription"/>
    <property type="evidence" value="ECO:0007669"/>
    <property type="project" value="InterPro"/>
</dbReference>
<dbReference type="FunFam" id="1.10.1220.10:FF:000004">
    <property type="entry name" value="Macrodomain Ter protein"/>
    <property type="match status" value="1"/>
</dbReference>
<dbReference type="FunFam" id="1.20.1270.380:FF:000001">
    <property type="entry name" value="Macrodomain Ter protein"/>
    <property type="match status" value="1"/>
</dbReference>
<dbReference type="Gene3D" id="1.20.1270.380">
    <property type="entry name" value="MatP, N-terminal domain"/>
    <property type="match status" value="1"/>
</dbReference>
<dbReference type="Gene3D" id="1.10.1220.10">
    <property type="entry name" value="Met repressor-like"/>
    <property type="match status" value="1"/>
</dbReference>
<dbReference type="HAMAP" id="MF_01073">
    <property type="entry name" value="MatP"/>
    <property type="match status" value="1"/>
</dbReference>
<dbReference type="InterPro" id="IPR013321">
    <property type="entry name" value="Arc_rbn_hlx_hlx"/>
</dbReference>
<dbReference type="InterPro" id="IPR009390">
    <property type="entry name" value="MatP"/>
</dbReference>
<dbReference type="InterPro" id="IPR035375">
    <property type="entry name" value="MatP_C"/>
</dbReference>
<dbReference type="InterPro" id="IPR035087">
    <property type="entry name" value="MatP_N"/>
</dbReference>
<dbReference type="InterPro" id="IPR038339">
    <property type="entry name" value="MatP_N_sf"/>
</dbReference>
<dbReference type="NCBIfam" id="NF003471">
    <property type="entry name" value="PRK05097.1"/>
    <property type="match status" value="1"/>
</dbReference>
<dbReference type="Pfam" id="PF06303">
    <property type="entry name" value="MatP"/>
    <property type="match status" value="1"/>
</dbReference>
<dbReference type="Pfam" id="PF17414">
    <property type="entry name" value="MatP_C"/>
    <property type="match status" value="1"/>
</dbReference>
<organism>
    <name type="scientific">Shigella dysenteriae serotype 1 (strain Sd197)</name>
    <dbReference type="NCBI Taxonomy" id="300267"/>
    <lineage>
        <taxon>Bacteria</taxon>
        <taxon>Pseudomonadati</taxon>
        <taxon>Pseudomonadota</taxon>
        <taxon>Gammaproteobacteria</taxon>
        <taxon>Enterobacterales</taxon>
        <taxon>Enterobacteriaceae</taxon>
        <taxon>Shigella</taxon>
    </lineage>
</organism>
<comment type="function">
    <text evidence="1">Required for spatial organization of the terminus region of the chromosome (Ter macrodomain) during the cell cycle. Prevents early segregation of duplicated Ter macrodomains during cell division. Binds specifically to matS, which is a 13 bp signature motif repeated within the Ter macrodomain.</text>
</comment>
<comment type="subunit">
    <text evidence="1">Homodimer.</text>
</comment>
<comment type="subcellular location">
    <subcellularLocation>
        <location evidence="1">Cytoplasm</location>
    </subcellularLocation>
</comment>
<comment type="similarity">
    <text evidence="1">Belongs to the MatP family.</text>
</comment>
<name>MATP_SHIDS</name>
<protein>
    <recommendedName>
        <fullName evidence="1">Macrodomain Ter protein</fullName>
    </recommendedName>
</protein>
<evidence type="ECO:0000255" key="1">
    <source>
        <dbReference type="HAMAP-Rule" id="MF_01073"/>
    </source>
</evidence>
<accession>Q32HV1</accession>
<keyword id="KW-0131">Cell cycle</keyword>
<keyword id="KW-0132">Cell division</keyword>
<keyword id="KW-0963">Cytoplasm</keyword>
<keyword id="KW-0238">DNA-binding</keyword>
<keyword id="KW-1185">Reference proteome</keyword>
<reference key="1">
    <citation type="journal article" date="2005" name="Nucleic Acids Res.">
        <title>Genome dynamics and diversity of Shigella species, the etiologic agents of bacillary dysentery.</title>
        <authorList>
            <person name="Yang F."/>
            <person name="Yang J."/>
            <person name="Zhang X."/>
            <person name="Chen L."/>
            <person name="Jiang Y."/>
            <person name="Yan Y."/>
            <person name="Tang X."/>
            <person name="Wang J."/>
            <person name="Xiong Z."/>
            <person name="Dong J."/>
            <person name="Xue Y."/>
            <person name="Zhu Y."/>
            <person name="Xu X."/>
            <person name="Sun L."/>
            <person name="Chen S."/>
            <person name="Nie H."/>
            <person name="Peng J."/>
            <person name="Xu J."/>
            <person name="Wang Y."/>
            <person name="Yuan Z."/>
            <person name="Wen Y."/>
            <person name="Yao Z."/>
            <person name="Shen Y."/>
            <person name="Qiang B."/>
            <person name="Hou Y."/>
            <person name="Yu J."/>
            <person name="Jin Q."/>
        </authorList>
    </citation>
    <scope>NUCLEOTIDE SEQUENCE [LARGE SCALE GENOMIC DNA]</scope>
    <source>
        <strain>Sd197</strain>
    </source>
</reference>
<sequence length="150" mass="17693">MKYQQLENLESGWKWKYLVKKHREGELITRYIEASAAQEAVDVLLSLENEPVLVNGWIDKHMNPELVNRMKQTIRARRKRHFNAEHQHTRKKSIDLEFIVWQRLAGLAQRRGKTLSETIVQLIEDAENKEKYANKMSSLKQDLQALLGKE</sequence>
<proteinExistence type="inferred from homology"/>
<feature type="chain" id="PRO_1000064636" description="Macrodomain Ter protein">
    <location>
        <begin position="1"/>
        <end position="150"/>
    </location>
</feature>
<gene>
    <name evidence="1" type="primary">matP</name>
    <name type="ordered locus">SDY_0929</name>
</gene>